<keyword id="KW-0002">3D-structure</keyword>
<keyword id="KW-0998">Cell outer membrane</keyword>
<keyword id="KW-1015">Disulfide bond</keyword>
<keyword id="KW-0472">Membrane</keyword>
<keyword id="KW-1185">Reference proteome</keyword>
<keyword id="KW-0732">Signal</keyword>
<comment type="function">
    <text evidence="1">Together with LptE, is involved in the assembly of lipopolysaccharide (LPS) at the surface of the outer membrane.</text>
</comment>
<comment type="subunit">
    <text evidence="1">Component of the lipopolysaccharide transport and assembly complex. Interacts with LptE and LptA.</text>
</comment>
<comment type="interaction">
    <interactant intactId="EBI-16111665">
        <id>Q83SQ0</id>
    </interactant>
    <interactant intactId="EBI-16111649">
        <id>Q83LX4</id>
        <label>lptE</label>
    </interactant>
    <organismsDiffer>false</organismsDiffer>
    <experiments>4</experiments>
</comment>
<comment type="subcellular location">
    <subcellularLocation>
        <location evidence="1">Cell outer membrane</location>
    </subcellularLocation>
</comment>
<comment type="PTM">
    <text evidence="1">Contains two intramolecular disulfide bonds.</text>
</comment>
<comment type="similarity">
    <text evidence="1">Belongs to the LptD family.</text>
</comment>
<proteinExistence type="evidence at protein level"/>
<protein>
    <recommendedName>
        <fullName evidence="1">LPS-assembly protein LptD</fullName>
    </recommendedName>
</protein>
<name>LPTD_SHIFL</name>
<accession>Q83SQ0</accession>
<accession>Q7C3B4</accession>
<reference key="1">
    <citation type="journal article" date="2002" name="Nucleic Acids Res.">
        <title>Genome sequence of Shigella flexneri 2a: insights into pathogenicity through comparison with genomes of Escherichia coli K12 and O157.</title>
        <authorList>
            <person name="Jin Q."/>
            <person name="Yuan Z."/>
            <person name="Xu J."/>
            <person name="Wang Y."/>
            <person name="Shen Y."/>
            <person name="Lu W."/>
            <person name="Wang J."/>
            <person name="Liu H."/>
            <person name="Yang J."/>
            <person name="Yang F."/>
            <person name="Zhang X."/>
            <person name="Zhang J."/>
            <person name="Yang G."/>
            <person name="Wu H."/>
            <person name="Qu D."/>
            <person name="Dong J."/>
            <person name="Sun L."/>
            <person name="Xue Y."/>
            <person name="Zhao A."/>
            <person name="Gao Y."/>
            <person name="Zhu J."/>
            <person name="Kan B."/>
            <person name="Ding K."/>
            <person name="Chen S."/>
            <person name="Cheng H."/>
            <person name="Yao Z."/>
            <person name="He B."/>
            <person name="Chen R."/>
            <person name="Ma D."/>
            <person name="Qiang B."/>
            <person name="Wen Y."/>
            <person name="Hou Y."/>
            <person name="Yu J."/>
        </authorList>
    </citation>
    <scope>NUCLEOTIDE SEQUENCE [LARGE SCALE GENOMIC DNA]</scope>
    <source>
        <strain>301 / Serotype 2a</strain>
    </source>
</reference>
<reference key="2">
    <citation type="journal article" date="2003" name="Infect. Immun.">
        <title>Complete genome sequence and comparative genomics of Shigella flexneri serotype 2a strain 2457T.</title>
        <authorList>
            <person name="Wei J."/>
            <person name="Goldberg M.B."/>
            <person name="Burland V."/>
            <person name="Venkatesan M.M."/>
            <person name="Deng W."/>
            <person name="Fournier G."/>
            <person name="Mayhew G.F."/>
            <person name="Plunkett G. III"/>
            <person name="Rose D.J."/>
            <person name="Darling A."/>
            <person name="Mau B."/>
            <person name="Perna N.T."/>
            <person name="Payne S.M."/>
            <person name="Runyen-Janecky L.J."/>
            <person name="Zhou S."/>
            <person name="Schwartz D.C."/>
            <person name="Blattner F.R."/>
        </authorList>
    </citation>
    <scope>NUCLEOTIDE SEQUENCE [LARGE SCALE GENOMIC DNA]</scope>
    <source>
        <strain>ATCC 700930 / 2457T / Serotype 2a</strain>
    </source>
</reference>
<gene>
    <name evidence="1" type="primary">lptD</name>
    <name type="synonym">imp</name>
    <name type="synonym">ostA</name>
    <name type="ordered locus">SF0051</name>
    <name type="ordered locus">S0053</name>
</gene>
<dbReference type="EMBL" id="AE005674">
    <property type="protein sequence ID" value="AAN41717.1"/>
    <property type="molecule type" value="Genomic_DNA"/>
</dbReference>
<dbReference type="EMBL" id="AE014073">
    <property type="protein sequence ID" value="AAP15597.1"/>
    <property type="molecule type" value="Genomic_DNA"/>
</dbReference>
<dbReference type="RefSeq" id="NP_706010.1">
    <property type="nucleotide sequence ID" value="NC_004337.2"/>
</dbReference>
<dbReference type="RefSeq" id="WP_000746145.1">
    <property type="nucleotide sequence ID" value="NZ_WPGW01000005.1"/>
</dbReference>
<dbReference type="PDB" id="4Q35">
    <property type="method" value="X-ray"/>
    <property type="resolution" value="2.39 A"/>
    <property type="chains" value="A=1-784"/>
</dbReference>
<dbReference type="PDBsum" id="4Q35"/>
<dbReference type="SMR" id="Q83SQ0"/>
<dbReference type="DIP" id="DIP-61034N"/>
<dbReference type="IntAct" id="Q83SQ0">
    <property type="interactions" value="1"/>
</dbReference>
<dbReference type="STRING" id="198214.SF0051"/>
<dbReference type="PaxDb" id="198214-SF0051"/>
<dbReference type="GeneID" id="1024572"/>
<dbReference type="KEGG" id="sfl:SF0051"/>
<dbReference type="KEGG" id="sfx:S0053"/>
<dbReference type="PATRIC" id="fig|198214.7.peg.60"/>
<dbReference type="HOGENOM" id="CLU_009039_2_0_6"/>
<dbReference type="EvolutionaryTrace" id="Q83SQ0"/>
<dbReference type="Proteomes" id="UP000001006">
    <property type="component" value="Chromosome"/>
</dbReference>
<dbReference type="Proteomes" id="UP000002673">
    <property type="component" value="Chromosome"/>
</dbReference>
<dbReference type="GO" id="GO:0009279">
    <property type="term" value="C:cell outer membrane"/>
    <property type="evidence" value="ECO:0007669"/>
    <property type="project" value="UniProtKB-SubCell"/>
</dbReference>
<dbReference type="GO" id="GO:1990351">
    <property type="term" value="C:transporter complex"/>
    <property type="evidence" value="ECO:0007669"/>
    <property type="project" value="TreeGrafter"/>
</dbReference>
<dbReference type="GO" id="GO:0043165">
    <property type="term" value="P:Gram-negative-bacterium-type cell outer membrane assembly"/>
    <property type="evidence" value="ECO:0007669"/>
    <property type="project" value="UniProtKB-UniRule"/>
</dbReference>
<dbReference type="GO" id="GO:0015920">
    <property type="term" value="P:lipopolysaccharide transport"/>
    <property type="evidence" value="ECO:0007669"/>
    <property type="project" value="InterPro"/>
</dbReference>
<dbReference type="FunFam" id="2.60.450.10:FF:000003">
    <property type="entry name" value="LPS-assembly protein LptD"/>
    <property type="match status" value="1"/>
</dbReference>
<dbReference type="Gene3D" id="2.60.450.10">
    <property type="entry name" value="Lipopolysaccharide (LPS) transport protein A like domain"/>
    <property type="match status" value="1"/>
</dbReference>
<dbReference type="HAMAP" id="MF_01411">
    <property type="entry name" value="LPS_assembly_LptD"/>
    <property type="match status" value="1"/>
</dbReference>
<dbReference type="InterPro" id="IPR020889">
    <property type="entry name" value="LipoPS_assembly_LptD"/>
</dbReference>
<dbReference type="InterPro" id="IPR050218">
    <property type="entry name" value="LptD"/>
</dbReference>
<dbReference type="InterPro" id="IPR007543">
    <property type="entry name" value="LptD_C"/>
</dbReference>
<dbReference type="InterPro" id="IPR005653">
    <property type="entry name" value="OstA-like_N"/>
</dbReference>
<dbReference type="NCBIfam" id="NF002997">
    <property type="entry name" value="PRK03761.1"/>
    <property type="match status" value="1"/>
</dbReference>
<dbReference type="PANTHER" id="PTHR30189">
    <property type="entry name" value="LPS-ASSEMBLY PROTEIN"/>
    <property type="match status" value="1"/>
</dbReference>
<dbReference type="PANTHER" id="PTHR30189:SF1">
    <property type="entry name" value="LPS-ASSEMBLY PROTEIN LPTD"/>
    <property type="match status" value="1"/>
</dbReference>
<dbReference type="Pfam" id="PF04453">
    <property type="entry name" value="LptD"/>
    <property type="match status" value="1"/>
</dbReference>
<dbReference type="Pfam" id="PF03968">
    <property type="entry name" value="LptD_N"/>
    <property type="match status" value="1"/>
</dbReference>
<feature type="signal peptide" evidence="1">
    <location>
        <begin position="1"/>
        <end position="24"/>
    </location>
</feature>
<feature type="chain" id="PRO_0000020290" description="LPS-assembly protein LptD">
    <location>
        <begin position="25"/>
        <end position="784"/>
    </location>
</feature>
<feature type="disulfide bond" evidence="1">
    <location>
        <begin position="31"/>
        <end position="724"/>
    </location>
</feature>
<feature type="disulfide bond" evidence="1">
    <location>
        <begin position="173"/>
        <end position="725"/>
    </location>
</feature>
<feature type="helix" evidence="2">
    <location>
        <begin position="27"/>
        <end position="32"/>
    </location>
</feature>
<feature type="strand" evidence="2">
    <location>
        <begin position="47"/>
        <end position="49"/>
    </location>
</feature>
<feature type="strand" evidence="2">
    <location>
        <begin position="53"/>
        <end position="55"/>
    </location>
</feature>
<feature type="strand" evidence="2">
    <location>
        <begin position="57"/>
        <end position="61"/>
    </location>
</feature>
<feature type="turn" evidence="2">
    <location>
        <begin position="63"/>
        <end position="65"/>
    </location>
</feature>
<feature type="strand" evidence="2">
    <location>
        <begin position="66"/>
        <end position="77"/>
    </location>
</feature>
<feature type="strand" evidence="2">
    <location>
        <begin position="80"/>
        <end position="85"/>
    </location>
</feature>
<feature type="strand" evidence="2">
    <location>
        <begin position="87"/>
        <end position="90"/>
    </location>
</feature>
<feature type="strand" evidence="2">
    <location>
        <begin position="103"/>
        <end position="106"/>
    </location>
</feature>
<feature type="strand" evidence="2">
    <location>
        <begin position="108"/>
        <end position="113"/>
    </location>
</feature>
<feature type="strand" evidence="2">
    <location>
        <begin position="115"/>
        <end position="127"/>
    </location>
</feature>
<feature type="turn" evidence="2">
    <location>
        <begin position="128"/>
        <end position="130"/>
    </location>
</feature>
<feature type="strand" evidence="2">
    <location>
        <begin position="133"/>
        <end position="145"/>
    </location>
</feature>
<feature type="strand" evidence="2">
    <location>
        <begin position="148"/>
        <end position="157"/>
    </location>
</feature>
<feature type="turn" evidence="2">
    <location>
        <begin position="158"/>
        <end position="161"/>
    </location>
</feature>
<feature type="strand" evidence="2">
    <location>
        <begin position="162"/>
        <end position="171"/>
    </location>
</feature>
<feature type="strand" evidence="2">
    <location>
        <begin position="179"/>
        <end position="190"/>
    </location>
</feature>
<feature type="turn" evidence="2">
    <location>
        <begin position="191"/>
        <end position="194"/>
    </location>
</feature>
<feature type="strand" evidence="2">
    <location>
        <begin position="195"/>
        <end position="205"/>
    </location>
</feature>
<feature type="strand" evidence="2">
    <location>
        <begin position="208"/>
        <end position="219"/>
    </location>
</feature>
<feature type="strand" evidence="2">
    <location>
        <begin position="232"/>
        <end position="236"/>
    </location>
</feature>
<feature type="turn" evidence="2">
    <location>
        <begin position="237"/>
        <end position="239"/>
    </location>
</feature>
<feature type="strand" evidence="2">
    <location>
        <begin position="240"/>
        <end position="244"/>
    </location>
</feature>
<feature type="strand" evidence="2">
    <location>
        <begin position="247"/>
        <end position="252"/>
    </location>
</feature>
<feature type="strand" evidence="2">
    <location>
        <begin position="255"/>
        <end position="264"/>
    </location>
</feature>
<feature type="helix" evidence="2">
    <location>
        <begin position="265"/>
        <end position="267"/>
    </location>
</feature>
<feature type="strand" evidence="2">
    <location>
        <begin position="269"/>
        <end position="280"/>
    </location>
</feature>
<feature type="strand" evidence="2">
    <location>
        <begin position="283"/>
        <end position="293"/>
    </location>
</feature>
<feature type="helix" evidence="2">
    <location>
        <begin position="296"/>
        <end position="301"/>
    </location>
</feature>
<feature type="strand" evidence="2">
    <location>
        <begin position="310"/>
        <end position="321"/>
    </location>
</feature>
<feature type="turn" evidence="2">
    <location>
        <begin position="322"/>
        <end position="324"/>
    </location>
</feature>
<feature type="strand" evidence="2">
    <location>
        <begin position="325"/>
        <end position="336"/>
    </location>
</feature>
<feature type="helix" evidence="2">
    <location>
        <begin position="339"/>
        <end position="342"/>
    </location>
</feature>
<feature type="strand" evidence="2">
    <location>
        <begin position="346"/>
        <end position="348"/>
    </location>
</feature>
<feature type="strand" evidence="2">
    <location>
        <begin position="353"/>
        <end position="365"/>
    </location>
</feature>
<feature type="strand" evidence="2">
    <location>
        <begin position="368"/>
        <end position="379"/>
    </location>
</feature>
<feature type="strand" evidence="2">
    <location>
        <begin position="381"/>
        <end position="383"/>
    </location>
</feature>
<feature type="strand" evidence="2">
    <location>
        <begin position="388"/>
        <end position="400"/>
    </location>
</feature>
<feature type="strand" evidence="2">
    <location>
        <begin position="407"/>
        <end position="424"/>
    </location>
</feature>
<feature type="strand" evidence="2">
    <location>
        <begin position="426"/>
        <end position="441"/>
    </location>
</feature>
<feature type="strand" evidence="2">
    <location>
        <begin position="443"/>
        <end position="461"/>
    </location>
</feature>
<feature type="helix" evidence="2">
    <location>
        <begin position="464"/>
        <end position="468"/>
    </location>
</feature>
<feature type="strand" evidence="2">
    <location>
        <begin position="476"/>
        <end position="491"/>
    </location>
</feature>
<feature type="strand" evidence="2">
    <location>
        <begin position="493"/>
        <end position="497"/>
    </location>
</feature>
<feature type="turn" evidence="2">
    <location>
        <begin position="498"/>
        <end position="500"/>
    </location>
</feature>
<feature type="strand" evidence="2">
    <location>
        <begin position="504"/>
        <end position="517"/>
    </location>
</feature>
<feature type="helix" evidence="2">
    <location>
        <begin position="537"/>
        <end position="540"/>
    </location>
</feature>
<feature type="strand" evidence="2">
    <location>
        <begin position="545"/>
        <end position="550"/>
    </location>
</feature>
<feature type="strand" evidence="2">
    <location>
        <begin position="555"/>
        <end position="567"/>
    </location>
</feature>
<feature type="strand" evidence="2">
    <location>
        <begin position="573"/>
        <end position="586"/>
    </location>
</feature>
<feature type="strand" evidence="2">
    <location>
        <begin position="603"/>
        <end position="615"/>
    </location>
</feature>
<feature type="strand" evidence="2">
    <location>
        <begin position="617"/>
        <end position="629"/>
    </location>
</feature>
<feature type="helix" evidence="2">
    <location>
        <begin position="630"/>
        <end position="632"/>
    </location>
</feature>
<feature type="strand" evidence="2">
    <location>
        <begin position="634"/>
        <end position="647"/>
    </location>
</feature>
<feature type="strand" evidence="2">
    <location>
        <begin position="650"/>
        <end position="659"/>
    </location>
</feature>
<feature type="helix" evidence="2">
    <location>
        <begin position="661"/>
        <end position="667"/>
    </location>
</feature>
<feature type="helix" evidence="2">
    <location>
        <begin position="670"/>
        <end position="674"/>
    </location>
</feature>
<feature type="turn" evidence="2">
    <location>
        <begin position="676"/>
        <end position="680"/>
    </location>
</feature>
<feature type="strand" evidence="2">
    <location>
        <begin position="682"/>
        <end position="693"/>
    </location>
</feature>
<feature type="turn" evidence="2">
    <location>
        <begin position="694"/>
        <end position="696"/>
    </location>
</feature>
<feature type="strand" evidence="2">
    <location>
        <begin position="697"/>
        <end position="706"/>
    </location>
</feature>
<feature type="turn" evidence="2">
    <location>
        <begin position="707"/>
        <end position="710"/>
    </location>
</feature>
<feature type="strand" evidence="2">
    <location>
        <begin position="711"/>
        <end position="722"/>
    </location>
</feature>
<feature type="strand" evidence="2">
    <location>
        <begin position="724"/>
        <end position="740"/>
    </location>
</feature>
<feature type="turn" evidence="2">
    <location>
        <begin position="741"/>
        <end position="744"/>
    </location>
</feature>
<feature type="strand" evidence="2">
    <location>
        <begin position="745"/>
        <end position="758"/>
    </location>
</feature>
<feature type="strand" evidence="2">
    <location>
        <begin position="760"/>
        <end position="763"/>
    </location>
</feature>
<feature type="helix" evidence="2">
    <location>
        <begin position="769"/>
        <end position="773"/>
    </location>
</feature>
<feature type="strand" evidence="2">
    <location>
        <begin position="775"/>
        <end position="778"/>
    </location>
</feature>
<organism>
    <name type="scientific">Shigella flexneri</name>
    <dbReference type="NCBI Taxonomy" id="623"/>
    <lineage>
        <taxon>Bacteria</taxon>
        <taxon>Pseudomonadati</taxon>
        <taxon>Pseudomonadota</taxon>
        <taxon>Gammaproteobacteria</taxon>
        <taxon>Enterobacterales</taxon>
        <taxon>Enterobacteriaceae</taxon>
        <taxon>Shigella</taxon>
    </lineage>
</organism>
<sequence>MKKRIPTLLATMIATALYSQQGLAADLASQCMLGVPSYDRPLVQGDTNDLPVTINADHAKGDYPDDAVFTGSVDIMQGNSRLQADEVQLHQKEAPGQPEPVRTVDALGNVHYDDNQVILKGPKGWANLNTKDTNVWEGDYQMVGRQGRGKADLMKQRGENRYTILDNGSFTSCLPGSDTWSVVGSEIIHDREEQVAEIWNARFKVGPVPIFYSPYLQLPVGDKRRSGFLIPNAKYTTTNYFEFYLPYYWNIAPNMDATITPHYMHRRGNIMWENEFRYLSQAGAGLMELDYLPSDKVYEDEHPNDDSSRRWLFYWNHSGVMDQVWRFNVDYTKVSDPSYFNDFDNKYGSSTDGYATQKFSVGYAVQNFNATVSTKQFQVFSEQNTSSYSAEPQLDVNYYQNDVGPFDTRIYGQAVHFVNTRDDMPEATRVHLEPTINLPLSNNWGSINTEAKFLATHYQQTNLDWYNSRNTTKLDESVNRVMPQFKVDGKMVFERDMEMLAPGYTQTLEPRAQYLYVPYRDQSDIYNYDSSLLQSDYSGLFRDRTYGGLDRIASANQVTTGVTSRIYDDAAVERFNISVGQIYYFTESRTGDDNITWENDDKTGSLVWAGDTYWRISERWGLRGGIQYDTRLDNVATSNSSIEYRRDEDRLVQLNYHYASPEYIQATLPKYYSTAEQYKNGISQVGAVASRPIADRWSIVGAYYYDTNANKQADSMLGVQYSSCCYAIRVGYERKLNGWDNDKQHAVYDNAIGFNIELRGLSSNYGLGTQEMLRSNILPYQNTL</sequence>
<evidence type="ECO:0000255" key="1">
    <source>
        <dbReference type="HAMAP-Rule" id="MF_01411"/>
    </source>
</evidence>
<evidence type="ECO:0007829" key="2">
    <source>
        <dbReference type="PDB" id="4Q35"/>
    </source>
</evidence>